<proteinExistence type="evidence at transcript level"/>
<feature type="signal peptide" evidence="3">
    <location>
        <begin position="1"/>
        <end position="24"/>
    </location>
</feature>
<feature type="chain" id="PRO_0000301976" description="EGF domain-specific O-linked N-acetylglucosamine transferase">
    <location>
        <begin position="25"/>
        <end position="525"/>
    </location>
</feature>
<feature type="short sequence motif" description="Required for optimal activity" evidence="1">
    <location>
        <begin position="293"/>
        <end position="295"/>
    </location>
</feature>
<feature type="short sequence motif" description="Prevents secretion from ER" evidence="4">
    <location>
        <begin position="522"/>
        <end position="525"/>
    </location>
</feature>
<feature type="glycosylation site" description="N-linked (GlcNAc...) asparagine" evidence="3">
    <location>
        <position position="352"/>
    </location>
</feature>
<protein>
    <recommendedName>
        <fullName>EGF domain-specific O-linked N-acetylglucosamine transferase</fullName>
        <ecNumber evidence="2">2.4.1.255</ecNumber>
    </recommendedName>
    <alternativeName>
        <fullName>Extracellular O-linked N-acetylglucosamine transferase</fullName>
    </alternativeName>
</protein>
<organism>
    <name type="scientific">Xenopus laevis</name>
    <name type="common">African clawed frog</name>
    <dbReference type="NCBI Taxonomy" id="8355"/>
    <lineage>
        <taxon>Eukaryota</taxon>
        <taxon>Metazoa</taxon>
        <taxon>Chordata</taxon>
        <taxon>Craniata</taxon>
        <taxon>Vertebrata</taxon>
        <taxon>Euteleostomi</taxon>
        <taxon>Amphibia</taxon>
        <taxon>Batrachia</taxon>
        <taxon>Anura</taxon>
        <taxon>Pipoidea</taxon>
        <taxon>Pipidae</taxon>
        <taxon>Xenopodinae</taxon>
        <taxon>Xenopus</taxon>
        <taxon>Xenopus</taxon>
    </lineage>
</organism>
<reference key="1">
    <citation type="submission" date="2004-06" db="EMBL/GenBank/DDBJ databases">
        <authorList>
            <consortium name="NIH - Xenopus Gene Collection (XGC) project"/>
        </authorList>
    </citation>
    <scope>NUCLEOTIDE SEQUENCE [LARGE SCALE MRNA]</scope>
    <source>
        <tissue>Gastrula</tissue>
    </source>
</reference>
<keyword id="KW-0256">Endoplasmic reticulum</keyword>
<keyword id="KW-0325">Glycoprotein</keyword>
<keyword id="KW-0328">Glycosyltransferase</keyword>
<keyword id="KW-1185">Reference proteome</keyword>
<keyword id="KW-0732">Signal</keyword>
<keyword id="KW-0808">Transferase</keyword>
<evidence type="ECO:0000250" key="1"/>
<evidence type="ECO:0000250" key="2">
    <source>
        <dbReference type="UniProtKB" id="Q8BYW9"/>
    </source>
</evidence>
<evidence type="ECO:0000255" key="3"/>
<evidence type="ECO:0000255" key="4">
    <source>
        <dbReference type="PROSITE-ProRule" id="PRU10138"/>
    </source>
</evidence>
<evidence type="ECO:0000305" key="5"/>
<accession>Q6GQ23</accession>
<sequence>MVPLRLVLLLHIIHFSCENEVGSAANNGSAQLYNYRKIHLPDDHIPYYLHSNRHVAALCLQDLHCPYKQHLQNLNSCWGYEKTCAEGHRFGYPVCDQVDFGWAKTIEESQQVFWRQADFGYVKERLAETQILCRPQEQGDSMLACSQNLQHCRATNLYLDLRHPRRGQENFKEDFLQEGEIGGHCDLDKQALLSQGAWKSPLQSWFAELQSYSSFKFKPIEDAHCDIIIEKPTYFMKLDAGVNMYHHFCDFVNLYITQHVNNSFSTDINIVMWTTSVYGYGDLFSDTWKAFTDYEITHLKAYDNKRVCFKDAVFALLPRMRYGLFYNTPLISHCHGSGLFRAFSQHVLHRLNITQHPATEAKIRVTILVRSTEFRKILNLDELVQALEAVPTFQVKVVDYKYRVLGFLEQLSITHNSDIFIGMHGAGLTHLLFLPDWAVVFELYNCEDARCYLDLARLRGIQYMTWEKGDKVFPQDKGHHPNLGEHPKFTNYAFDVEEFLRLVQQGATYVSRHSKWPLRRTRDEL</sequence>
<dbReference type="EC" id="2.4.1.255" evidence="2"/>
<dbReference type="EMBL" id="BC072925">
    <property type="protein sequence ID" value="AAH72925.1"/>
    <property type="molecule type" value="mRNA"/>
</dbReference>
<dbReference type="RefSeq" id="NP_001085557.1">
    <property type="nucleotide sequence ID" value="NM_001092088.1"/>
</dbReference>
<dbReference type="SMR" id="Q6GQ23"/>
<dbReference type="CAZy" id="GT61">
    <property type="family name" value="Glycosyltransferase Family 61"/>
</dbReference>
<dbReference type="GlyCosmos" id="Q6GQ23">
    <property type="glycosylation" value="1 site, No reported glycans"/>
</dbReference>
<dbReference type="GeneID" id="443983"/>
<dbReference type="KEGG" id="xla:443983"/>
<dbReference type="AGR" id="Xenbase:XB-GENE-994622"/>
<dbReference type="CTD" id="443983"/>
<dbReference type="Xenbase" id="XB-GENE-994622">
    <property type="gene designation" value="eogt.L"/>
</dbReference>
<dbReference type="OrthoDB" id="529273at2759"/>
<dbReference type="Proteomes" id="UP000186698">
    <property type="component" value="Chromosome 4L"/>
</dbReference>
<dbReference type="Bgee" id="443983">
    <property type="expression patterns" value="Expressed in egg cell and 19 other cell types or tissues"/>
</dbReference>
<dbReference type="GO" id="GO:0005788">
    <property type="term" value="C:endoplasmic reticulum lumen"/>
    <property type="evidence" value="ECO:0000318"/>
    <property type="project" value="GO_Central"/>
</dbReference>
<dbReference type="GO" id="GO:0097363">
    <property type="term" value="F:protein O-acetylglucosaminyltransferase activity"/>
    <property type="evidence" value="ECO:0000250"/>
    <property type="project" value="UniProtKB"/>
</dbReference>
<dbReference type="GO" id="GO:0097370">
    <property type="term" value="P:protein O-GlcNAcylation via threonine"/>
    <property type="evidence" value="ECO:0000318"/>
    <property type="project" value="GO_Central"/>
</dbReference>
<dbReference type="GO" id="GO:0006493">
    <property type="term" value="P:protein O-linked glycosylation"/>
    <property type="evidence" value="ECO:0000250"/>
    <property type="project" value="UniProtKB"/>
</dbReference>
<dbReference type="InterPro" id="IPR049625">
    <property type="entry name" value="Glyco_transf_61_cat"/>
</dbReference>
<dbReference type="InterPro" id="IPR007657">
    <property type="entry name" value="Glycosyltransferase_61"/>
</dbReference>
<dbReference type="PANTHER" id="PTHR20961:SF148">
    <property type="entry name" value="EGF DOMAIN-SPECIFIC O-LINKED N-ACETYLGLUCOSAMINE TRANSFERASE"/>
    <property type="match status" value="1"/>
</dbReference>
<dbReference type="PANTHER" id="PTHR20961">
    <property type="entry name" value="GLYCOSYLTRANSFERASE"/>
    <property type="match status" value="1"/>
</dbReference>
<dbReference type="Pfam" id="PF04577">
    <property type="entry name" value="Glyco_transf_61"/>
    <property type="match status" value="1"/>
</dbReference>
<dbReference type="PROSITE" id="PS00014">
    <property type="entry name" value="ER_TARGET"/>
    <property type="match status" value="1"/>
</dbReference>
<gene>
    <name type="primary">eogt</name>
    <name type="synonym">aer61</name>
</gene>
<name>EOGT_XENLA</name>
<comment type="function">
    <text evidence="2">Catalyzes the transfer of a single N-acetylglucosamine from UDP-GlcNAc to a serine or threonine residue in extracellular proteins resulting in their modification with a beta-linked N-acetylglucosamine (O-GlcNAc). Specifically glycosylates the Thr residue located between the fifth and sixth conserved cysteines of folded EGF-like domains.</text>
</comment>
<comment type="catalytic activity">
    <reaction evidence="2">
        <text>L-seryl-[protein] + UDP-N-acetyl-alpha-D-glucosamine = 3-O-(N-acetyl-beta-D-glucosaminyl)-L-seryl-[protein] + UDP + H(+)</text>
        <dbReference type="Rhea" id="RHEA:48904"/>
        <dbReference type="Rhea" id="RHEA-COMP:9863"/>
        <dbReference type="Rhea" id="RHEA-COMP:12251"/>
        <dbReference type="ChEBI" id="CHEBI:15378"/>
        <dbReference type="ChEBI" id="CHEBI:29999"/>
        <dbReference type="ChEBI" id="CHEBI:57705"/>
        <dbReference type="ChEBI" id="CHEBI:58223"/>
        <dbReference type="ChEBI" id="CHEBI:90838"/>
        <dbReference type="EC" id="2.4.1.255"/>
    </reaction>
</comment>
<comment type="catalytic activity">
    <reaction evidence="2">
        <text>L-threonyl-[protein] + UDP-N-acetyl-alpha-D-glucosamine = 3-O-(N-acetyl-beta-D-glucosaminyl)-L-threonyl-[protein] + UDP + H(+)</text>
        <dbReference type="Rhea" id="RHEA:48908"/>
        <dbReference type="Rhea" id="RHEA-COMP:11060"/>
        <dbReference type="Rhea" id="RHEA-COMP:12252"/>
        <dbReference type="ChEBI" id="CHEBI:15378"/>
        <dbReference type="ChEBI" id="CHEBI:30013"/>
        <dbReference type="ChEBI" id="CHEBI:57705"/>
        <dbReference type="ChEBI" id="CHEBI:58223"/>
        <dbReference type="ChEBI" id="CHEBI:90840"/>
        <dbReference type="EC" id="2.4.1.255"/>
    </reaction>
</comment>
<comment type="subcellular location">
    <subcellularLocation>
        <location evidence="4">Endoplasmic reticulum lumen</location>
    </subcellularLocation>
</comment>
<comment type="similarity">
    <text evidence="5">Belongs to the glycosyltransferase 61 family.</text>
</comment>